<name>Y1282_LATSS</name>
<feature type="chain" id="PRO_0000225832" description="UPF0145 protein LCA_1282">
    <location>
        <begin position="1"/>
        <end position="108"/>
    </location>
</feature>
<proteinExistence type="inferred from homology"/>
<reference key="1">
    <citation type="journal article" date="2005" name="Nat. Biotechnol.">
        <title>The complete genome sequence of the meat-borne lactic acid bacterium Lactobacillus sakei 23K.</title>
        <authorList>
            <person name="Chaillou S."/>
            <person name="Champomier-Verges M.-C."/>
            <person name="Cornet M."/>
            <person name="Crutz-Le Coq A.-M."/>
            <person name="Dudez A.-M."/>
            <person name="Martin V."/>
            <person name="Beaufils S."/>
            <person name="Darbon-Rongere E."/>
            <person name="Bossy R."/>
            <person name="Loux V."/>
            <person name="Zagorec M."/>
        </authorList>
    </citation>
    <scope>NUCLEOTIDE SEQUENCE [LARGE SCALE GENOMIC DNA]</scope>
    <source>
        <strain>23K</strain>
    </source>
</reference>
<sequence>MTNQILITTTESIPGKHYEVLGEVFGLTTQSKNVFKNIGASLKNVVGGEIRAYTEMMTESRDVAIDRLRQNAIEMGADAVVMMRFDSGSIGTDMQSVAAYGTAVKYID</sequence>
<comment type="similarity">
    <text evidence="1">Belongs to the UPF0145 family.</text>
</comment>
<keyword id="KW-1185">Reference proteome</keyword>
<evidence type="ECO:0000255" key="1">
    <source>
        <dbReference type="HAMAP-Rule" id="MF_00338"/>
    </source>
</evidence>
<dbReference type="EMBL" id="CR936503">
    <property type="protein sequence ID" value="CAI55584.1"/>
    <property type="molecule type" value="Genomic_DNA"/>
</dbReference>
<dbReference type="RefSeq" id="WP_011374977.1">
    <property type="nucleotide sequence ID" value="NC_007576.1"/>
</dbReference>
<dbReference type="SMR" id="Q38W49"/>
<dbReference type="STRING" id="314315.LCA_1282"/>
<dbReference type="GeneID" id="57132194"/>
<dbReference type="KEGG" id="lsa:LCA_1282"/>
<dbReference type="eggNOG" id="COG0393">
    <property type="taxonomic scope" value="Bacteria"/>
</dbReference>
<dbReference type="HOGENOM" id="CLU_117144_1_2_9"/>
<dbReference type="OrthoDB" id="9796448at2"/>
<dbReference type="Proteomes" id="UP000002707">
    <property type="component" value="Chromosome"/>
</dbReference>
<dbReference type="Gene3D" id="3.30.110.70">
    <property type="entry name" value="Hypothetical protein apc22750. Chain B"/>
    <property type="match status" value="1"/>
</dbReference>
<dbReference type="HAMAP" id="MF_00338">
    <property type="entry name" value="UPF0145"/>
    <property type="match status" value="1"/>
</dbReference>
<dbReference type="InterPro" id="IPR035439">
    <property type="entry name" value="UPF0145_dom_sf"/>
</dbReference>
<dbReference type="InterPro" id="IPR002765">
    <property type="entry name" value="UPF0145_YbjQ-like"/>
</dbReference>
<dbReference type="PANTHER" id="PTHR34068:SF2">
    <property type="entry name" value="UPF0145 PROTEIN SCO3412"/>
    <property type="match status" value="1"/>
</dbReference>
<dbReference type="PANTHER" id="PTHR34068">
    <property type="entry name" value="UPF0145 PROTEIN YBJQ"/>
    <property type="match status" value="1"/>
</dbReference>
<dbReference type="Pfam" id="PF01906">
    <property type="entry name" value="YbjQ_1"/>
    <property type="match status" value="1"/>
</dbReference>
<dbReference type="SUPFAM" id="SSF117782">
    <property type="entry name" value="YbjQ-like"/>
    <property type="match status" value="1"/>
</dbReference>
<protein>
    <recommendedName>
        <fullName evidence="1">UPF0145 protein LCA_1282</fullName>
    </recommendedName>
</protein>
<organism>
    <name type="scientific">Latilactobacillus sakei subsp. sakei (strain 23K)</name>
    <name type="common">Lactobacillus sakei subsp. sakei</name>
    <dbReference type="NCBI Taxonomy" id="314315"/>
    <lineage>
        <taxon>Bacteria</taxon>
        <taxon>Bacillati</taxon>
        <taxon>Bacillota</taxon>
        <taxon>Bacilli</taxon>
        <taxon>Lactobacillales</taxon>
        <taxon>Lactobacillaceae</taxon>
        <taxon>Latilactobacillus</taxon>
    </lineage>
</organism>
<accession>Q38W49</accession>
<gene>
    <name type="ordered locus">LCA_1282</name>
</gene>